<gene>
    <name type="ORF">SPAPB24D3.07c</name>
</gene>
<keyword id="KW-0256">Endoplasmic reticulum</keyword>
<keyword id="KW-1185">Reference proteome</keyword>
<keyword id="KW-0732">Signal</keyword>
<feature type="signal peptide" evidence="1">
    <location>
        <begin position="1"/>
        <end position="22"/>
    </location>
</feature>
<feature type="chain" id="PRO_0000304049" description="Uncharacterized protein PB24D3.07c">
    <location>
        <begin position="23"/>
        <end position="300"/>
    </location>
</feature>
<reference key="1">
    <citation type="journal article" date="2002" name="Nature">
        <title>The genome sequence of Schizosaccharomyces pombe.</title>
        <authorList>
            <person name="Wood V."/>
            <person name="Gwilliam R."/>
            <person name="Rajandream M.A."/>
            <person name="Lyne M.H."/>
            <person name="Lyne R."/>
            <person name="Stewart A."/>
            <person name="Sgouros J.G."/>
            <person name="Peat N."/>
            <person name="Hayles J."/>
            <person name="Baker S.G."/>
            <person name="Basham D."/>
            <person name="Bowman S."/>
            <person name="Brooks K."/>
            <person name="Brown D."/>
            <person name="Brown S."/>
            <person name="Chillingworth T."/>
            <person name="Churcher C.M."/>
            <person name="Collins M."/>
            <person name="Connor R."/>
            <person name="Cronin A."/>
            <person name="Davis P."/>
            <person name="Feltwell T."/>
            <person name="Fraser A."/>
            <person name="Gentles S."/>
            <person name="Goble A."/>
            <person name="Hamlin N."/>
            <person name="Harris D.E."/>
            <person name="Hidalgo J."/>
            <person name="Hodgson G."/>
            <person name="Holroyd S."/>
            <person name="Hornsby T."/>
            <person name="Howarth S."/>
            <person name="Huckle E.J."/>
            <person name="Hunt S."/>
            <person name="Jagels K."/>
            <person name="James K.D."/>
            <person name="Jones L."/>
            <person name="Jones M."/>
            <person name="Leather S."/>
            <person name="McDonald S."/>
            <person name="McLean J."/>
            <person name="Mooney P."/>
            <person name="Moule S."/>
            <person name="Mungall K.L."/>
            <person name="Murphy L.D."/>
            <person name="Niblett D."/>
            <person name="Odell C."/>
            <person name="Oliver K."/>
            <person name="O'Neil S."/>
            <person name="Pearson D."/>
            <person name="Quail M.A."/>
            <person name="Rabbinowitsch E."/>
            <person name="Rutherford K.M."/>
            <person name="Rutter S."/>
            <person name="Saunders D."/>
            <person name="Seeger K."/>
            <person name="Sharp S."/>
            <person name="Skelton J."/>
            <person name="Simmonds M.N."/>
            <person name="Squares R."/>
            <person name="Squares S."/>
            <person name="Stevens K."/>
            <person name="Taylor K."/>
            <person name="Taylor R.G."/>
            <person name="Tivey A."/>
            <person name="Walsh S.V."/>
            <person name="Warren T."/>
            <person name="Whitehead S."/>
            <person name="Woodward J.R."/>
            <person name="Volckaert G."/>
            <person name="Aert R."/>
            <person name="Robben J."/>
            <person name="Grymonprez B."/>
            <person name="Weltjens I."/>
            <person name="Vanstreels E."/>
            <person name="Rieger M."/>
            <person name="Schaefer M."/>
            <person name="Mueller-Auer S."/>
            <person name="Gabel C."/>
            <person name="Fuchs M."/>
            <person name="Duesterhoeft A."/>
            <person name="Fritzc C."/>
            <person name="Holzer E."/>
            <person name="Moestl D."/>
            <person name="Hilbert H."/>
            <person name="Borzym K."/>
            <person name="Langer I."/>
            <person name="Beck A."/>
            <person name="Lehrach H."/>
            <person name="Reinhardt R."/>
            <person name="Pohl T.M."/>
            <person name="Eger P."/>
            <person name="Zimmermann W."/>
            <person name="Wedler H."/>
            <person name="Wambutt R."/>
            <person name="Purnelle B."/>
            <person name="Goffeau A."/>
            <person name="Cadieu E."/>
            <person name="Dreano S."/>
            <person name="Gloux S."/>
            <person name="Lelaure V."/>
            <person name="Mottier S."/>
            <person name="Galibert F."/>
            <person name="Aves S.J."/>
            <person name="Xiang Z."/>
            <person name="Hunt C."/>
            <person name="Moore K."/>
            <person name="Hurst S.M."/>
            <person name="Lucas M."/>
            <person name="Rochet M."/>
            <person name="Gaillardin C."/>
            <person name="Tallada V.A."/>
            <person name="Garzon A."/>
            <person name="Thode G."/>
            <person name="Daga R.R."/>
            <person name="Cruzado L."/>
            <person name="Jimenez J."/>
            <person name="Sanchez M."/>
            <person name="del Rey F."/>
            <person name="Benito J."/>
            <person name="Dominguez A."/>
            <person name="Revuelta J.L."/>
            <person name="Moreno S."/>
            <person name="Armstrong J."/>
            <person name="Forsburg S.L."/>
            <person name="Cerutti L."/>
            <person name="Lowe T."/>
            <person name="McCombie W.R."/>
            <person name="Paulsen I."/>
            <person name="Potashkin J."/>
            <person name="Shpakovski G.V."/>
            <person name="Ussery D."/>
            <person name="Barrell B.G."/>
            <person name="Nurse P."/>
        </authorList>
    </citation>
    <scope>NUCLEOTIDE SEQUENCE [LARGE SCALE GENOMIC DNA]</scope>
    <source>
        <strain>972 / ATCC 24843</strain>
    </source>
</reference>
<reference key="2">
    <citation type="journal article" date="2006" name="Nat. Biotechnol.">
        <title>ORFeome cloning and global analysis of protein localization in the fission yeast Schizosaccharomyces pombe.</title>
        <authorList>
            <person name="Matsuyama A."/>
            <person name="Arai R."/>
            <person name="Yashiroda Y."/>
            <person name="Shirai A."/>
            <person name="Kamata A."/>
            <person name="Sekido S."/>
            <person name="Kobayashi Y."/>
            <person name="Hashimoto A."/>
            <person name="Hamamoto M."/>
            <person name="Hiraoka Y."/>
            <person name="Horinouchi S."/>
            <person name="Yoshida M."/>
        </authorList>
    </citation>
    <scope>SUBCELLULAR LOCATION [LARGE SCALE ANALYSIS]</scope>
</reference>
<evidence type="ECO:0000255" key="1"/>
<evidence type="ECO:0000269" key="2">
    <source>
    </source>
</evidence>
<organism>
    <name type="scientific">Schizosaccharomyces pombe (strain 972 / ATCC 24843)</name>
    <name type="common">Fission yeast</name>
    <dbReference type="NCBI Taxonomy" id="284812"/>
    <lineage>
        <taxon>Eukaryota</taxon>
        <taxon>Fungi</taxon>
        <taxon>Dikarya</taxon>
        <taxon>Ascomycota</taxon>
        <taxon>Taphrinomycotina</taxon>
        <taxon>Schizosaccharomycetes</taxon>
        <taxon>Schizosaccharomycetales</taxon>
        <taxon>Schizosaccharomycetaceae</taxon>
        <taxon>Schizosaccharomyces</taxon>
    </lineage>
</organism>
<name>YKM7_SCHPO</name>
<protein>
    <recommendedName>
        <fullName>Uncharacterized protein PB24D3.07c</fullName>
    </recommendedName>
</protein>
<accession>Q9C0Y7</accession>
<comment type="subcellular location">
    <subcellularLocation>
        <location evidence="2">Endoplasmic reticulum</location>
    </subcellularLocation>
</comment>
<dbReference type="EMBL" id="CU329670">
    <property type="protein sequence ID" value="CAC36903.1"/>
    <property type="molecule type" value="Genomic_DNA"/>
</dbReference>
<dbReference type="RefSeq" id="NP_593993.1">
    <property type="nucleotide sequence ID" value="NM_001019419.2"/>
</dbReference>
<dbReference type="BioGRID" id="279958">
    <property type="interactions" value="4"/>
</dbReference>
<dbReference type="STRING" id="284812.Q9C0Y7"/>
<dbReference type="iPTMnet" id="Q9C0Y7"/>
<dbReference type="PaxDb" id="4896-SPAPB24D3.07c.1"/>
<dbReference type="EnsemblFungi" id="SPAPB24D3.07c.1">
    <property type="protein sequence ID" value="SPAPB24D3.07c.1:pep"/>
    <property type="gene ID" value="SPAPB24D3.07c"/>
</dbReference>
<dbReference type="KEGG" id="spo:2543541"/>
<dbReference type="PomBase" id="SPAPB24D3.07c"/>
<dbReference type="VEuPathDB" id="FungiDB:SPAPB24D3.07c"/>
<dbReference type="HOGENOM" id="CLU_927997_0_0_1"/>
<dbReference type="InParanoid" id="Q9C0Y7"/>
<dbReference type="PRO" id="PR:Q9C0Y7"/>
<dbReference type="Proteomes" id="UP000002485">
    <property type="component" value="Chromosome I"/>
</dbReference>
<dbReference type="GO" id="GO:0005783">
    <property type="term" value="C:endoplasmic reticulum"/>
    <property type="evidence" value="ECO:0007005"/>
    <property type="project" value="PomBase"/>
</dbReference>
<sequence length="300" mass="32738">MKSFVWTLLGALSLGSLTTAYGANASNSSVPTPDNTLVVSYTNTSCYTSGPLSPDTRFNRTTRGTFSKVRDALKFRLNGPIHHWDIANELFDTALGVEIIDTQYGINNRTSRDWCTAVSALEKGDLIEFAAAFTAFDDVNPTKEVVPDALVGTLALWAKYSYEYDLTSIVSLFGKNWTVDELGWGTYIAHSLNEISSNTTGAANATLFIDTQTKSDCYKLASTIESWKYAPLSAFPNYGPFYIYGQCVATFTSGYSPLVEPAFTFASALNTTLNSFPNGTLPTQTQVVGDIGVKFLQYFA</sequence>
<proteinExistence type="inferred from homology"/>